<feature type="chain" id="PRO_0000328934" description="Transient receptor potential cation channel subfamily M member 5">
    <location>
        <begin position="1"/>
        <end position="1158"/>
    </location>
</feature>
<feature type="topological domain" description="Cytoplasmic" evidence="26">
    <location>
        <begin position="1"/>
        <end position="729"/>
    </location>
</feature>
<feature type="transmembrane region" description="Helical; Name=1" evidence="2">
    <location>
        <begin position="730"/>
        <end position="754"/>
    </location>
</feature>
<feature type="topological domain" description="Extracellular" evidence="26">
    <location>
        <begin position="755"/>
        <end position="764"/>
    </location>
</feature>
<feature type="transmembrane region" description="Helical; Name=2" evidence="2">
    <location>
        <begin position="765"/>
        <end position="784"/>
    </location>
</feature>
<feature type="topological domain" description="Cytoplasmic" evidence="26">
    <location>
        <begin position="785"/>
        <end position="805"/>
    </location>
</feature>
<feature type="transmembrane region" description="Helical; Name=3" evidence="2">
    <location>
        <begin position="806"/>
        <end position="824"/>
    </location>
</feature>
<feature type="topological domain" description="Extracellular" evidence="26">
    <location>
        <begin position="825"/>
        <end position="831"/>
    </location>
</feature>
<feature type="transmembrane region" description="Helical; Name=4" evidence="2">
    <location>
        <begin position="832"/>
        <end position="854"/>
    </location>
</feature>
<feature type="topological domain" description="Cytoplasmic" evidence="26">
    <location>
        <begin position="855"/>
        <end position="863"/>
    </location>
</feature>
<feature type="transmembrane region" description="Helical; Name=5" evidence="2">
    <location>
        <begin position="864"/>
        <end position="893"/>
    </location>
</feature>
<feature type="topological domain" description="Extracellular" evidence="26">
    <location>
        <begin position="894"/>
        <end position="902"/>
    </location>
</feature>
<feature type="intramembrane region" description="Pore-forming" evidence="2">
    <location>
        <begin position="903"/>
        <end position="938"/>
    </location>
</feature>
<feature type="topological domain" description="Extracellular" evidence="26">
    <location>
        <begin position="939"/>
        <end position="950"/>
    </location>
</feature>
<feature type="transmembrane region" description="Helical; Name=6" evidence="2">
    <location>
        <begin position="951"/>
        <end position="985"/>
    </location>
</feature>
<feature type="topological domain" description="Cytoplasmic" evidence="26">
    <location>
        <begin position="986"/>
        <end position="1158"/>
    </location>
</feature>
<feature type="region of interest" description="Disordered" evidence="4">
    <location>
        <begin position="488"/>
        <end position="507"/>
    </location>
</feature>
<feature type="region of interest" description="Disordered" evidence="4">
    <location>
        <begin position="1127"/>
        <end position="1158"/>
    </location>
</feature>
<feature type="coiled-coil region" evidence="3">
    <location>
        <begin position="552"/>
        <end position="572"/>
    </location>
</feature>
<feature type="short sequence motif" description="Selectivity filter" evidence="2">
    <location>
        <begin position="917"/>
        <end position="919"/>
    </location>
</feature>
<feature type="compositionally biased region" description="Polar residues" evidence="4">
    <location>
        <begin position="1127"/>
        <end position="1141"/>
    </location>
</feature>
<feature type="binding site" evidence="2">
    <location>
        <position position="341"/>
    </location>
    <ligand>
        <name>Ca(2+)</name>
        <dbReference type="ChEBI" id="CHEBI:29108"/>
        <label>1</label>
    </ligand>
</feature>
<feature type="binding site" evidence="2">
    <location>
        <position position="350"/>
    </location>
    <ligand>
        <name>Ca(2+)</name>
        <dbReference type="ChEBI" id="CHEBI:29108"/>
        <label>1</label>
    </ligand>
</feature>
<feature type="binding site" evidence="2">
    <location>
        <position position="353"/>
    </location>
    <ligand>
        <name>Ca(2+)</name>
        <dbReference type="ChEBI" id="CHEBI:29108"/>
        <label>1</label>
    </ligand>
</feature>
<feature type="binding site" evidence="2">
    <location>
        <position position="354"/>
    </location>
    <ligand>
        <name>Ca(2+)</name>
        <dbReference type="ChEBI" id="CHEBI:29108"/>
        <label>1</label>
    </ligand>
</feature>
<feature type="binding site" evidence="2">
    <location>
        <position position="781"/>
    </location>
    <ligand>
        <name>Ca(2+)</name>
        <dbReference type="ChEBI" id="CHEBI:29108"/>
        <label>2</label>
    </ligand>
</feature>
<feature type="binding site" evidence="2">
    <location>
        <position position="784"/>
    </location>
    <ligand>
        <name>Ca(2+)</name>
        <dbReference type="ChEBI" id="CHEBI:29108"/>
        <label>2</label>
    </ligand>
</feature>
<feature type="binding site" evidence="2">
    <location>
        <position position="807"/>
    </location>
    <ligand>
        <name>Ca(2+)</name>
        <dbReference type="ChEBI" id="CHEBI:29108"/>
        <label>2</label>
    </ligand>
</feature>
<feature type="binding site" evidence="2">
    <location>
        <position position="810"/>
    </location>
    <ligand>
        <name>Ca(2+)</name>
        <dbReference type="ChEBI" id="CHEBI:29108"/>
        <label>2</label>
    </ligand>
</feature>
<feature type="binding site" evidence="2">
    <location>
        <position position="1002"/>
    </location>
    <ligand>
        <name>Ca(2+)</name>
        <dbReference type="ChEBI" id="CHEBI:29108"/>
        <label>2</label>
    </ligand>
</feature>
<feature type="modified residue" description="Phosphoserine; by PKC" evidence="29">
    <location>
        <position position="129"/>
    </location>
</feature>
<feature type="splice variant" id="VSP_052744" description="In isoform 3." evidence="25">
    <original>SYTFQVVQGNADMFWKFQRYHLI</original>
    <variation>RVLTETGPMSWYFAAVSSGLDLQ</variation>
    <location>
        <begin position="978"/>
        <end position="1000"/>
    </location>
</feature>
<feature type="splice variant" id="VSP_052745" description="In isoform 3." evidence="25">
    <location>
        <begin position="1001"/>
        <end position="1158"/>
    </location>
</feature>
<feature type="splice variant" id="VSP_052746" description="In isoform 2." evidence="24">
    <original>ANYCMLLLS</original>
    <variation>SKYGFRPWE</variation>
    <location>
        <begin position="1108"/>
        <end position="1116"/>
    </location>
</feature>
<feature type="splice variant" id="VSP_052747" description="In isoform 2." evidence="24">
    <location>
        <begin position="1117"/>
        <end position="1158"/>
    </location>
</feature>
<feature type="mutagenesis site" description="Abolishes the Gq-dependent modulation of TRPM5." evidence="23">
    <original>S</original>
    <variation>A</variation>
    <location>
        <position position="129"/>
    </location>
</feature>
<feature type="mutagenesis site" description="Increases of the Ca(2+)-evoked TRPM5 current in both positive and negative voltages; mimicking the PKC-dependent phosphorylated form of TRPM5." evidence="23">
    <original>S</original>
    <variation>D</variation>
    <location>
        <position position="129"/>
    </location>
</feature>
<feature type="mutagenesis site" description="Does not change the Ca(2+)-evoked current of TRPM5." evidence="23">
    <original>S</original>
    <variation>E</variation>
    <location>
        <position position="129"/>
    </location>
</feature>
<feature type="mutagenesis site" description="Reduces sensitivity to block by extracellular acidification. Sensitivity to block by low extracellular pH is nearly abolished; when associated with N-935." evidence="13">
    <original>E</original>
    <variation>Q</variation>
    <location>
        <position position="831"/>
    </location>
</feature>
<feature type="mutagenesis site" description="Shows normal sensitivity to acid block and significant recovery from acid-enhanced inactivation." evidence="13">
    <original>H</original>
    <variation>N</variation>
    <location>
        <position position="897"/>
    </location>
</feature>
<feature type="mutagenesis site" description="Reduces sensitivity to block by extracellular acidification. Sensitivity to block by low extracellular pH is nearly abolished; when associated with Q-831." evidence="13">
    <original>H</original>
    <variation>N</variation>
    <location>
        <position position="935"/>
    </location>
</feature>
<feature type="sequence conflict" description="In Ref. 5; AAI33713." evidence="26" ref="5">
    <original>C</original>
    <variation>S</variation>
    <location>
        <position position="24"/>
    </location>
</feature>
<feature type="sequence conflict" description="In Ref. 3; CAB94717." evidence="26" ref="3">
    <original>H</original>
    <variation>P</variation>
    <location>
        <position position="612"/>
    </location>
</feature>
<feature type="sequence conflict" description="In Ref. 6; BAE36157." evidence="26" ref="6">
    <original>D</original>
    <variation>E</variation>
    <location>
        <position position="871"/>
    </location>
</feature>
<feature type="sequence conflict" description="In Ref. 5; AAI33713." evidence="26" ref="5">
    <original>H</original>
    <variation>N</variation>
    <location>
        <position position="897"/>
    </location>
</feature>
<comment type="function">
    <text evidence="9 10 16 17 18 19 21 22 23 27 28">Monovalent cation-selective ion channel activated by intracellular Ca(2+) in a voltage- and temperature-dependent manner (PubMed:12842017, PubMed:14657398, PubMed:17522321, PubMed:38538847). Mediates the transport of Na(+), K(+) and Cs(+) ions equally well (PubMed:12842017). Activated directly by increase in intracellular Ca(2+), but is impermeable to it (PubMed:12842017). The activation mechanism of TRPM5 involves a multistep process. TRPM5 activation involves ligand binding (i.e., tastant molecule, glucose stimulation) to Gq/G-protein coupled receptors (GPCR) and leads to the breakdown of phosphatidylinositol bisphosphate (PIP2) into diacylglycerol (DAG) and inositol trisphosphate (IP3), IP3 binds to its receptors in the endoplasmic reticulum and cause Ca(2+) release. Simultaneously with the intracellular Ca(2+) release, DAG activates the protein kinase C (PKC), which phosphorylates the TRPM5 channel. This phosphorylation combined with the bound Ca(2+), leads to a robust inward current allowing the entry of sodium ions (Na+) into the cell. This ion influx depolarizes the cell membrane, generating action potentials that propagate TRPM5 signals. Is a key player in sensing sweet, umami and bitter stimuli (Probable) (PubMed:16436689, PubMed:16935556). May also be involved in sensing semiochemicals (PubMed:17267604). Involved in insulin secretion by pancreatic beta cells (PubMed:20194741, PubMed:20393858).</text>
</comment>
<comment type="catalytic activity">
    <reaction evidence="9">
        <text>Na(+)(in) = Na(+)(out)</text>
        <dbReference type="Rhea" id="RHEA:34963"/>
        <dbReference type="ChEBI" id="CHEBI:29101"/>
    </reaction>
</comment>
<comment type="catalytic activity">
    <reaction evidence="9">
        <text>K(+)(in) = K(+)(out)</text>
        <dbReference type="Rhea" id="RHEA:29463"/>
        <dbReference type="ChEBI" id="CHEBI:29103"/>
    </reaction>
</comment>
<comment type="activity regulation">
    <text evidence="9 10 12 13 15 19">Ca(2+)-activated cation channel (PubMed:12842017, PubMed:14657398, PubMed:17522321). Displays voltage dependence modulation (PubMed:12842017). Regulated by PI(4,5)P2 levels. PI(4,5)P 2 reverses the Ca(2+) -induced desensitization of channels (PubMed:14657398, PubMed:17522321). Inhibited by flufenamic acid with an IC(50) of 24.5 uM and spermine with an IC(50) of 37 uM (PubMed:15670874). Is a highly temperature-sensitive, heat activated channel showing a steep increase of inward currents at temperatures between 15 and 35 degrees Celsius. Heat activation is due to a shift of the voltage-dependent activation curve to negative potentials (PubMed:16355226). The channel is blocked by extracellular acidification (PubMed:15731110).</text>
</comment>
<comment type="subunit">
    <text evidence="2">Homotetramer.</text>
</comment>
<comment type="subcellular location">
    <subcellularLocation>
        <location evidence="3">Cell membrane</location>
        <topology evidence="1">Multi-pass membrane protein</topology>
    </subcellularLocation>
</comment>
<comment type="alternative products">
    <event type="alternative splicing"/>
    <isoform>
        <id>Q9JJH7-1</id>
        <name evidence="5 6 7 9 11 14">1</name>
        <sequence type="displayed"/>
    </isoform>
    <isoform>
        <id>Q9JJH7-2</id>
        <name evidence="7">2</name>
        <sequence type="described" ref="VSP_052746 VSP_052747"/>
    </isoform>
    <isoform>
        <id>Q9JJH7-3</id>
        <name evidence="9">3</name>
        <sequence type="described" ref="VSP_052744 VSP_052745"/>
    </isoform>
</comment>
<comment type="tissue specificity">
    <text evidence="5 8 18 20">Strongly expressed in liver, heart, testis, brain and kidney. Detected in fetal liver, kidney, spleen, brain, heart and lung, and in adult skin, eyes, spleen, stomach, small intestine, colon, lung, bladder, pancreas and thymus. Biallelically expressed at all stages and tissues examined. Also expressed in subsets of taste receptor cells of the tongue, in olfactory sensory neurons of the main olfactory epithelium and in the vomeronasal organ.</text>
</comment>
<comment type="domain">
    <text evidence="2">Contains two Ca(2+)-binding sites that are allosterically coupled. The binding site in the intracellular domain modulates the voltage dependence and the accessibility of Ca(2+) in the transmembrane domain.</text>
</comment>
<comment type="PTM">
    <text evidence="23">Multiple phosphorylation sites regulate the Gq/ TRPM5 modulation axis, with the Ser-129 playing a substantial role in this positive modulation.</text>
</comment>
<comment type="disruption phenotype">
    <text evidence="16 21">Mice show diminished behavioral and nerve responses to bitter, sweet and umami tastes (PubMed:16436689). Glucose-induced insulin release from pancreatic islets isolated from Trpm5-deficient mice is significantly reduced, resulting in an impaired glucose tolerance in Trpm5-deficient mice (PubMed:20194741).</text>
</comment>
<comment type="similarity">
    <text evidence="26">Belongs to the transient receptor (TC 1.A.4) family. LTrpC subfamily. TRPM5 sub-subfamily.</text>
</comment>
<comment type="sequence caution" evidence="26">
    <conflict type="frameshift">
        <sequence resource="EMBL-CDS" id="CAB94717"/>
    </conflict>
</comment>
<comment type="sequence caution" evidence="26">
    <conflict type="frameshift">
        <sequence resource="EMBL-CDS" id="CAC19456"/>
    </conflict>
</comment>
<name>TRPM5_MOUSE</name>
<sequence length="1158" mass="130844">MQTTQSSCPGSPPDTEDGWEPILCRGEINFGGSGKKRGKFVKVPSSVAPSVLFELLLTEWHLPAPNLVVSLVGEERPLAMKSWLRDVLRKGLVKAAQSTGAWILTSALHVGLARHVGQAVRDHSLASTSTKIRVVAIGMASLDRILHRQLLDGVHQKEDTPIHYPADEGNIQGPLCPLDSNLSHFILVESGALGSGNDGLTELQLSLEKHISQQRTGYGGTSCIQIPVLCLLVNGDPNTLERISRAVEQAAPWLILAGSGGIADVLAALVSQPHLLVPQVAEKQFREKFPSECFSWEAIVHWTELLQNIAAHPHLLTVYDFEQEGSEDLDTVILKALVKACKSHSQEAQDYLDELKLAVAWDRVDIAKSEIFNGDVEWKSCDLEEVMTDALVSNKPDFVRLFVDSGADMAEFLTYGRLQQLYHSVSPKSLLFELLQRKHEEGRLTLAGLGAQQARELPIGLPAFSLHEVSRVLKDFLHDACRGFYQDGRRMEERGPPKRPAGQKWLPDLSRKSEDPWRDLFLWAVLQNRYEMATYFWAMGREGVAAALAACKIIKEMSHLEKEAEVARTMREAKYEQLALDLFSECYGNSEDRAFALLVRRNHSWSRTTCLHLATEADAKAFFAHDGVQAFLTKIWWGDMATGTPILRLLGAFTCPALIYTNLISFSEDAPQRMDLEDLQEPDSLDMEKSFLCSRGGQLEKLTEAPRAPGDLGPQAAFLLTRWRKFWGAPVTVFLGNVVMYFAFLFLFTYVLLVDFRPPPQGPSGSEVTLYFWVFTLVLEEIRQGFFTDEDTHLVKKFTLYVEDNWNKCDMVAIFLFIVGVTCRMVPSVFEAGRTVLAIDFMVFTLRLIHIFAIHKQLGPKIIIVERMMKDVFFFLFFLSVWLVAYGVTTQALLHPHDGRLEWIFRRVLYRPYLQIFGQIPLDEIDEARVNCSLHPLLLESSASCPNLYANWLVILLLVTFLLVTNVLLMNLLIAMFSYTFQVVQGNADMFWKFQRYHLIVEYHGRPALAPPFILLSHLSLVLKQVFRKEAQHKRQHLERDLPDPLDQKIITWETVQKENFLSTMEKRRRDSEGEVLRKTAHRVDLIAKYIGGLREQEKRIKCLESQANYCMLLLSSMTDTLAPGGTYSSSQNCGCRSQPASARDREYLESGLPPSDT</sequence>
<gene>
    <name evidence="37" type="primary">Trpm5</name>
    <name evidence="36" type="synonym">Ltrpc5</name>
    <name evidence="34" type="synonym">Mtr1</name>
</gene>
<organism>
    <name type="scientific">Mus musculus</name>
    <name type="common">Mouse</name>
    <dbReference type="NCBI Taxonomy" id="10090"/>
    <lineage>
        <taxon>Eukaryota</taxon>
        <taxon>Metazoa</taxon>
        <taxon>Chordata</taxon>
        <taxon>Craniata</taxon>
        <taxon>Vertebrata</taxon>
        <taxon>Euteleostomi</taxon>
        <taxon>Mammalia</taxon>
        <taxon>Eutheria</taxon>
        <taxon>Euarchontoglires</taxon>
        <taxon>Glires</taxon>
        <taxon>Rodentia</taxon>
        <taxon>Myomorpha</taxon>
        <taxon>Muroidea</taxon>
        <taxon>Muridae</taxon>
        <taxon>Murinae</taxon>
        <taxon>Mus</taxon>
        <taxon>Mus</taxon>
    </lineage>
</organism>
<dbReference type="EMBL" id="AB039952">
    <property type="protein sequence ID" value="BAA96877.1"/>
    <property type="molecule type" value="mRNA"/>
</dbReference>
<dbReference type="EMBL" id="AF228681">
    <property type="protein sequence ID" value="AAF98120.1"/>
    <property type="molecule type" value="mRNA"/>
</dbReference>
<dbReference type="EMBL" id="AJ251835">
    <property type="protein sequence ID" value="CAC19456.1"/>
    <property type="status" value="ALT_FRAME"/>
    <property type="molecule type" value="Genomic_DNA"/>
</dbReference>
<dbReference type="EMBL" id="AJ251835">
    <property type="protein sequence ID" value="CAC19457.1"/>
    <property type="molecule type" value="Genomic_DNA"/>
</dbReference>
<dbReference type="EMBL" id="AJ271092">
    <property type="protein sequence ID" value="CAB94717.2"/>
    <property type="status" value="ALT_FRAME"/>
    <property type="molecule type" value="mRNA"/>
</dbReference>
<dbReference type="EMBL" id="AY280364">
    <property type="protein sequence ID" value="AAP44476.1"/>
    <property type="molecule type" value="mRNA"/>
</dbReference>
<dbReference type="EMBL" id="AY280365">
    <property type="protein sequence ID" value="AAP44477.1"/>
    <property type="molecule type" value="mRNA"/>
</dbReference>
<dbReference type="EMBL" id="BC133712">
    <property type="protein sequence ID" value="AAI33713.1"/>
    <property type="molecule type" value="mRNA"/>
</dbReference>
<dbReference type="EMBL" id="AK161030">
    <property type="protein sequence ID" value="BAE36157.1"/>
    <property type="molecule type" value="mRNA"/>
</dbReference>
<dbReference type="CCDS" id="CCDS52462.1">
    <molecule id="Q9JJH7-1"/>
</dbReference>
<dbReference type="RefSeq" id="NP_064673.2">
    <molecule id="Q9JJH7-1"/>
    <property type="nucleotide sequence ID" value="NM_020277.2"/>
</dbReference>
<dbReference type="RefSeq" id="XP_006508708.1">
    <molecule id="Q9JJH7-1"/>
    <property type="nucleotide sequence ID" value="XM_006508645.1"/>
</dbReference>
<dbReference type="RefSeq" id="XP_006508709.1">
    <molecule id="Q9JJH7-3"/>
    <property type="nucleotide sequence ID" value="XM_006508646.4"/>
</dbReference>
<dbReference type="SMR" id="Q9JJH7"/>
<dbReference type="BioGRID" id="208190">
    <property type="interactions" value="1"/>
</dbReference>
<dbReference type="FunCoup" id="Q9JJH7">
    <property type="interactions" value="155"/>
</dbReference>
<dbReference type="STRING" id="10090.ENSMUSP00000009390"/>
<dbReference type="BindingDB" id="Q9JJH7"/>
<dbReference type="ChEMBL" id="CHEMBL3886124"/>
<dbReference type="GuidetoPHARMACOLOGY" id="497"/>
<dbReference type="iPTMnet" id="Q9JJH7"/>
<dbReference type="PhosphoSitePlus" id="Q9JJH7"/>
<dbReference type="PaxDb" id="10090-ENSMUSP00000009390"/>
<dbReference type="ProteomicsDB" id="300022">
    <molecule id="Q9JJH7-1"/>
</dbReference>
<dbReference type="ProteomicsDB" id="300023">
    <molecule id="Q9JJH7-2"/>
</dbReference>
<dbReference type="ProteomicsDB" id="300024">
    <molecule id="Q9JJH7-3"/>
</dbReference>
<dbReference type="Antibodypedia" id="23152">
    <property type="antibodies" value="164 antibodies from 30 providers"/>
</dbReference>
<dbReference type="DNASU" id="56843"/>
<dbReference type="Ensembl" id="ENSMUST00000009390.10">
    <molecule id="Q9JJH7-1"/>
    <property type="protein sequence ID" value="ENSMUSP00000009390.4"/>
    <property type="gene ID" value="ENSMUSG00000009246.15"/>
</dbReference>
<dbReference type="Ensembl" id="ENSMUST00000150867.2">
    <molecule id="Q9JJH7-3"/>
    <property type="protein sequence ID" value="ENSMUSP00000114302.2"/>
    <property type="gene ID" value="ENSMUSG00000009246.15"/>
</dbReference>
<dbReference type="GeneID" id="56843"/>
<dbReference type="KEGG" id="mmu:56843"/>
<dbReference type="UCSC" id="uc009koz.1">
    <molecule id="Q9JJH7-1"/>
    <property type="organism name" value="mouse"/>
</dbReference>
<dbReference type="AGR" id="MGI:1861718"/>
<dbReference type="CTD" id="29850"/>
<dbReference type="MGI" id="MGI:1861718">
    <property type="gene designation" value="Trpm5"/>
</dbReference>
<dbReference type="VEuPathDB" id="HostDB:ENSMUSG00000009246"/>
<dbReference type="eggNOG" id="KOG3614">
    <property type="taxonomic scope" value="Eukaryota"/>
</dbReference>
<dbReference type="GeneTree" id="ENSGT00940000160588"/>
<dbReference type="HOGENOM" id="CLU_001390_0_1_1"/>
<dbReference type="InParanoid" id="Q9JJH7"/>
<dbReference type="OMA" id="CYCTAVI"/>
<dbReference type="OrthoDB" id="310870at2759"/>
<dbReference type="PhylomeDB" id="Q9JJH7"/>
<dbReference type="TreeFam" id="TF314204"/>
<dbReference type="Reactome" id="R-MMU-3295583">
    <property type="pathway name" value="TRP channels"/>
</dbReference>
<dbReference type="BioGRID-ORCS" id="56843">
    <property type="hits" value="4 hits in 77 CRISPR screens"/>
</dbReference>
<dbReference type="CD-CODE" id="DE1E139C">
    <property type="entry name" value="Chromatoid body"/>
</dbReference>
<dbReference type="ChiTaRS" id="Trpm5">
    <property type="organism name" value="mouse"/>
</dbReference>
<dbReference type="PRO" id="PR:Q9JJH7"/>
<dbReference type="Proteomes" id="UP000000589">
    <property type="component" value="Chromosome 7"/>
</dbReference>
<dbReference type="RNAct" id="Q9JJH7">
    <property type="molecule type" value="protein"/>
</dbReference>
<dbReference type="Bgee" id="ENSMUSG00000009246">
    <property type="expression patterns" value="Expressed in islet of Langerhans and 86 other cell types or tissues"/>
</dbReference>
<dbReference type="ExpressionAtlas" id="Q9JJH7">
    <property type="expression patterns" value="baseline and differential"/>
</dbReference>
<dbReference type="GO" id="GO:0030425">
    <property type="term" value="C:dendrite"/>
    <property type="evidence" value="ECO:0007669"/>
    <property type="project" value="Ensembl"/>
</dbReference>
<dbReference type="GO" id="GO:0034702">
    <property type="term" value="C:monoatomic ion channel complex"/>
    <property type="evidence" value="ECO:0007669"/>
    <property type="project" value="UniProtKB-KW"/>
</dbReference>
<dbReference type="GO" id="GO:0043025">
    <property type="term" value="C:neuronal cell body"/>
    <property type="evidence" value="ECO:0007669"/>
    <property type="project" value="Ensembl"/>
</dbReference>
<dbReference type="GO" id="GO:0005886">
    <property type="term" value="C:plasma membrane"/>
    <property type="evidence" value="ECO:0000304"/>
    <property type="project" value="Reactome"/>
</dbReference>
<dbReference type="GO" id="GO:0005509">
    <property type="term" value="F:calcium ion binding"/>
    <property type="evidence" value="ECO:0000250"/>
    <property type="project" value="UniProtKB"/>
</dbReference>
<dbReference type="GO" id="GO:0005227">
    <property type="term" value="F:calcium-activated cation channel activity"/>
    <property type="evidence" value="ECO:0000314"/>
    <property type="project" value="UniProtKB"/>
</dbReference>
<dbReference type="GO" id="GO:0042802">
    <property type="term" value="F:identical protein binding"/>
    <property type="evidence" value="ECO:0000250"/>
    <property type="project" value="UniProtKB"/>
</dbReference>
<dbReference type="GO" id="GO:0005267">
    <property type="term" value="F:potassium channel activity"/>
    <property type="evidence" value="ECO:0000314"/>
    <property type="project" value="UniProtKB"/>
</dbReference>
<dbReference type="GO" id="GO:0005272">
    <property type="term" value="F:sodium channel activity"/>
    <property type="evidence" value="ECO:0000314"/>
    <property type="project" value="UniProtKB"/>
</dbReference>
<dbReference type="GO" id="GO:0034220">
    <property type="term" value="P:monoatomic ion transmembrane transport"/>
    <property type="evidence" value="ECO:0000314"/>
    <property type="project" value="UniProtKB"/>
</dbReference>
<dbReference type="GO" id="GO:0035774">
    <property type="term" value="P:positive regulation of insulin secretion involved in cellular response to glucose stimulus"/>
    <property type="evidence" value="ECO:0000315"/>
    <property type="project" value="UniProtKB"/>
</dbReference>
<dbReference type="InterPro" id="IPR005821">
    <property type="entry name" value="Ion_trans_dom"/>
</dbReference>
<dbReference type="InterPro" id="IPR050927">
    <property type="entry name" value="TRPM"/>
</dbReference>
<dbReference type="InterPro" id="IPR041491">
    <property type="entry name" value="TRPM_SLOG"/>
</dbReference>
<dbReference type="PANTHER" id="PTHR13800:SF5">
    <property type="entry name" value="TRANSIENT RECEPTOR POTENTIAL CATION CHANNEL SUBFAMILY M MEMBER 5"/>
    <property type="match status" value="1"/>
</dbReference>
<dbReference type="PANTHER" id="PTHR13800">
    <property type="entry name" value="TRANSIENT RECEPTOR POTENTIAL CATION CHANNEL, SUBFAMILY M, MEMBER 6"/>
    <property type="match status" value="1"/>
</dbReference>
<dbReference type="Pfam" id="PF00520">
    <property type="entry name" value="Ion_trans"/>
    <property type="match status" value="1"/>
</dbReference>
<dbReference type="Pfam" id="PF18139">
    <property type="entry name" value="LSDAT_euk"/>
    <property type="match status" value="1"/>
</dbReference>
<dbReference type="Pfam" id="PF25508">
    <property type="entry name" value="TRPM2"/>
    <property type="match status" value="1"/>
</dbReference>
<evidence type="ECO:0000250" key="1">
    <source>
        <dbReference type="UniProtKB" id="Q8TD43"/>
    </source>
</evidence>
<evidence type="ECO:0000250" key="2">
    <source>
        <dbReference type="UniProtKB" id="S5UH55"/>
    </source>
</evidence>
<evidence type="ECO:0000255" key="3"/>
<evidence type="ECO:0000256" key="4">
    <source>
        <dbReference type="SAM" id="MobiDB-lite"/>
    </source>
</evidence>
<evidence type="ECO:0000269" key="5">
    <source>
    </source>
</evidence>
<evidence type="ECO:0000269" key="6">
    <source>
    </source>
</evidence>
<evidence type="ECO:0000269" key="7">
    <source>
    </source>
</evidence>
<evidence type="ECO:0000269" key="8">
    <source>
    </source>
</evidence>
<evidence type="ECO:0000269" key="9">
    <source>
    </source>
</evidence>
<evidence type="ECO:0000269" key="10">
    <source>
    </source>
</evidence>
<evidence type="ECO:0000269" key="11">
    <source>
    </source>
</evidence>
<evidence type="ECO:0000269" key="12">
    <source>
    </source>
</evidence>
<evidence type="ECO:0000269" key="13">
    <source>
    </source>
</evidence>
<evidence type="ECO:0000269" key="14">
    <source>
    </source>
</evidence>
<evidence type="ECO:0000269" key="15">
    <source>
    </source>
</evidence>
<evidence type="ECO:0000269" key="16">
    <source>
    </source>
</evidence>
<evidence type="ECO:0000269" key="17">
    <source>
    </source>
</evidence>
<evidence type="ECO:0000269" key="18">
    <source>
    </source>
</evidence>
<evidence type="ECO:0000269" key="19">
    <source>
    </source>
</evidence>
<evidence type="ECO:0000269" key="20">
    <source>
    </source>
</evidence>
<evidence type="ECO:0000269" key="21">
    <source>
    </source>
</evidence>
<evidence type="ECO:0000269" key="22">
    <source>
    </source>
</evidence>
<evidence type="ECO:0000269" key="23">
    <source>
    </source>
</evidence>
<evidence type="ECO:0000303" key="24">
    <source>
    </source>
</evidence>
<evidence type="ECO:0000303" key="25">
    <source>
    </source>
</evidence>
<evidence type="ECO:0000305" key="26"/>
<evidence type="ECO:0000305" key="27">
    <source>
    </source>
</evidence>
<evidence type="ECO:0000305" key="28">
    <source>
    </source>
</evidence>
<evidence type="ECO:0000305" key="29">
    <source>
    </source>
</evidence>
<evidence type="ECO:0000312" key="30">
    <source>
        <dbReference type="EMBL" id="AAF98120.1"/>
    </source>
</evidence>
<evidence type="ECO:0000312" key="31">
    <source>
        <dbReference type="EMBL" id="AAI33713.1"/>
    </source>
</evidence>
<evidence type="ECO:0000312" key="32">
    <source>
        <dbReference type="EMBL" id="AAP44476.1"/>
    </source>
</evidence>
<evidence type="ECO:0000312" key="33">
    <source>
        <dbReference type="EMBL" id="AAP44477.1"/>
    </source>
</evidence>
<evidence type="ECO:0000312" key="34">
    <source>
        <dbReference type="EMBL" id="BAA96877.1"/>
    </source>
</evidence>
<evidence type="ECO:0000312" key="35">
    <source>
        <dbReference type="EMBL" id="BAE36157.1"/>
    </source>
</evidence>
<evidence type="ECO:0000312" key="36">
    <source>
        <dbReference type="EMBL" id="CAB94717.2"/>
    </source>
</evidence>
<evidence type="ECO:0000312" key="37">
    <source>
        <dbReference type="MGI" id="MGI:1861718"/>
    </source>
</evidence>
<proteinExistence type="evidence at protein level"/>
<protein>
    <recommendedName>
        <fullName>Transient receptor potential cation channel subfamily M member 5</fullName>
    </recommendedName>
    <alternativeName>
        <fullName>Long transient receptor potential channel 5</fullName>
        <shortName>LTrpC-5</shortName>
        <shortName>LTrpC5</shortName>
    </alternativeName>
    <alternativeName>
        <fullName>MLSN1- and TRP-related gene 1 protein</fullName>
    </alternativeName>
</protein>
<reference evidence="26 34" key="1">
    <citation type="journal article" date="2000" name="DNA Res.">
        <title>Sequence-based structural features between Kvlqt1 and Tapa1 on mouse chromosome 7F4/F5 corresponding to the Beckwith-Wiedemann syndrome region on human 11p15.5: long-stretches of unusually well conserved intronic sequences of kvlqt1 between mouse and human.</title>
        <authorList>
            <person name="Yatsuki H."/>
            <person name="Watanabe H."/>
            <person name="Hattori M."/>
            <person name="Joh K."/>
            <person name="Soejima H."/>
            <person name="Komoda H."/>
            <person name="Xin Z."/>
            <person name="Zhu X."/>
            <person name="Higashimoto K."/>
            <person name="Nishimura M."/>
            <person name="Kuratomi S."/>
            <person name="Sasaki H."/>
            <person name="Sakaki Y."/>
            <person name="Mukai T."/>
        </authorList>
    </citation>
    <scope>NUCLEOTIDE SEQUENCE [MRNA] (ISOFORM 1)</scope>
</reference>
<reference evidence="26 30" key="2">
    <citation type="journal article" date="2000" name="Genomics">
        <title>Mtr1, a novel biallelically expressed gene in the center of the mouse distal chromosome 7 imprinting cluster, is a member of the Trp gene family.</title>
        <authorList>
            <person name="Enklaar T."/>
            <person name="Esswein M."/>
            <person name="Oswald M."/>
            <person name="Hilbert K."/>
            <person name="Winterpacht A."/>
            <person name="Higgins M."/>
            <person name="Zabel B."/>
            <person name="Prawitt D."/>
        </authorList>
    </citation>
    <scope>NUCLEOTIDE SEQUENCE [MRNA] (ISOFORM 1)</scope>
    <scope>TISSUE SPECIFICITY</scope>
</reference>
<reference evidence="26 36" key="3">
    <citation type="journal article" date="2000" name="Hum. Mol. Genet.">
        <title>Sequence conservation and variability of imprinting in the Beckwith-Wiedemann syndrome gene cluster in human and mouse.</title>
        <authorList>
            <person name="Paulsen M."/>
            <person name="El-Maarri O."/>
            <person name="Engemann S."/>
            <person name="Stroedicke M."/>
            <person name="Franck O."/>
            <person name="Davies K."/>
            <person name="Reinhardt R."/>
            <person name="Reik W."/>
            <person name="Walter J."/>
        </authorList>
    </citation>
    <scope>NUCLEOTIDE SEQUENCE [GENOMIC DNA / MRNA] (ISOFORM 1)</scope>
    <scope>NUCLEOTIDE SEQUENCE [GENOMIC DNA] (ISOFORM 2)</scope>
    <source>
        <strain evidence="36">129/Sv</strain>
    </source>
</reference>
<reference evidence="26 32" key="4">
    <citation type="journal article" date="2003" name="Curr. Biol.">
        <title>TRPM5 is a voltage-modulated and Ca(2+)-activated monovalent selective cation channel.</title>
        <authorList>
            <person name="Hofmann T."/>
            <person name="Chubanov V."/>
            <person name="Gudermann T."/>
            <person name="Montell C."/>
        </authorList>
    </citation>
    <scope>NUCLEOTIDE SEQUENCE [MRNA] (ISOFORMS 1 AND 3)</scope>
    <scope>FUNCTION</scope>
    <scope>TRANSPORTER ACTIVITY</scope>
    <scope>ACTIVITY REGULATION</scope>
    <source>
        <tissue evidence="33">Testis</tissue>
    </source>
</reference>
<reference evidence="26 31" key="5">
    <citation type="journal article" date="2004" name="Genome Res.">
        <title>The status, quality, and expansion of the NIH full-length cDNA project: the Mammalian Gene Collection (MGC).</title>
        <authorList>
            <consortium name="The MGC Project Team"/>
        </authorList>
    </citation>
    <scope>NUCLEOTIDE SEQUENCE [LARGE SCALE MRNA] (ISOFORM 1)</scope>
</reference>
<reference evidence="26 35" key="6">
    <citation type="journal article" date="2005" name="Science">
        <title>The transcriptional landscape of the mammalian genome.</title>
        <authorList>
            <person name="Carninci P."/>
            <person name="Kasukawa T."/>
            <person name="Katayama S."/>
            <person name="Gough J."/>
            <person name="Frith M.C."/>
            <person name="Maeda N."/>
            <person name="Oyama R."/>
            <person name="Ravasi T."/>
            <person name="Lenhard B."/>
            <person name="Wells C."/>
            <person name="Kodzius R."/>
            <person name="Shimokawa K."/>
            <person name="Bajic V.B."/>
            <person name="Brenner S.E."/>
            <person name="Batalov S."/>
            <person name="Forrest A.R."/>
            <person name="Zavolan M."/>
            <person name="Davis M.J."/>
            <person name="Wilming L.G."/>
            <person name="Aidinis V."/>
            <person name="Allen J.E."/>
            <person name="Ambesi-Impiombato A."/>
            <person name="Apweiler R."/>
            <person name="Aturaliya R.N."/>
            <person name="Bailey T.L."/>
            <person name="Bansal M."/>
            <person name="Baxter L."/>
            <person name="Beisel K.W."/>
            <person name="Bersano T."/>
            <person name="Bono H."/>
            <person name="Chalk A.M."/>
            <person name="Chiu K.P."/>
            <person name="Choudhary V."/>
            <person name="Christoffels A."/>
            <person name="Clutterbuck D.R."/>
            <person name="Crowe M.L."/>
            <person name="Dalla E."/>
            <person name="Dalrymple B.P."/>
            <person name="de Bono B."/>
            <person name="Della Gatta G."/>
            <person name="di Bernardo D."/>
            <person name="Down T."/>
            <person name="Engstrom P."/>
            <person name="Fagiolini M."/>
            <person name="Faulkner G."/>
            <person name="Fletcher C.F."/>
            <person name="Fukushima T."/>
            <person name="Furuno M."/>
            <person name="Futaki S."/>
            <person name="Gariboldi M."/>
            <person name="Georgii-Hemming P."/>
            <person name="Gingeras T.R."/>
            <person name="Gojobori T."/>
            <person name="Green R.E."/>
            <person name="Gustincich S."/>
            <person name="Harbers M."/>
            <person name="Hayashi Y."/>
            <person name="Hensch T.K."/>
            <person name="Hirokawa N."/>
            <person name="Hill D."/>
            <person name="Huminiecki L."/>
            <person name="Iacono M."/>
            <person name="Ikeo K."/>
            <person name="Iwama A."/>
            <person name="Ishikawa T."/>
            <person name="Jakt M."/>
            <person name="Kanapin A."/>
            <person name="Katoh M."/>
            <person name="Kawasawa Y."/>
            <person name="Kelso J."/>
            <person name="Kitamura H."/>
            <person name="Kitano H."/>
            <person name="Kollias G."/>
            <person name="Krishnan S.P."/>
            <person name="Kruger A."/>
            <person name="Kummerfeld S.K."/>
            <person name="Kurochkin I.V."/>
            <person name="Lareau L.F."/>
            <person name="Lazarevic D."/>
            <person name="Lipovich L."/>
            <person name="Liu J."/>
            <person name="Liuni S."/>
            <person name="McWilliam S."/>
            <person name="Madan Babu M."/>
            <person name="Madera M."/>
            <person name="Marchionni L."/>
            <person name="Matsuda H."/>
            <person name="Matsuzawa S."/>
            <person name="Miki H."/>
            <person name="Mignone F."/>
            <person name="Miyake S."/>
            <person name="Morris K."/>
            <person name="Mottagui-Tabar S."/>
            <person name="Mulder N."/>
            <person name="Nakano N."/>
            <person name="Nakauchi H."/>
            <person name="Ng P."/>
            <person name="Nilsson R."/>
            <person name="Nishiguchi S."/>
            <person name="Nishikawa S."/>
            <person name="Nori F."/>
            <person name="Ohara O."/>
            <person name="Okazaki Y."/>
            <person name="Orlando V."/>
            <person name="Pang K.C."/>
            <person name="Pavan W.J."/>
            <person name="Pavesi G."/>
            <person name="Pesole G."/>
            <person name="Petrovsky N."/>
            <person name="Piazza S."/>
            <person name="Reed J."/>
            <person name="Reid J.F."/>
            <person name="Ring B.Z."/>
            <person name="Ringwald M."/>
            <person name="Rost B."/>
            <person name="Ruan Y."/>
            <person name="Salzberg S.L."/>
            <person name="Sandelin A."/>
            <person name="Schneider C."/>
            <person name="Schoenbach C."/>
            <person name="Sekiguchi K."/>
            <person name="Semple C.A."/>
            <person name="Seno S."/>
            <person name="Sessa L."/>
            <person name="Sheng Y."/>
            <person name="Shibata Y."/>
            <person name="Shimada H."/>
            <person name="Shimada K."/>
            <person name="Silva D."/>
            <person name="Sinclair B."/>
            <person name="Sperling S."/>
            <person name="Stupka E."/>
            <person name="Sugiura K."/>
            <person name="Sultana R."/>
            <person name="Takenaka Y."/>
            <person name="Taki K."/>
            <person name="Tammoja K."/>
            <person name="Tan S.L."/>
            <person name="Tang S."/>
            <person name="Taylor M.S."/>
            <person name="Tegner J."/>
            <person name="Teichmann S.A."/>
            <person name="Ueda H.R."/>
            <person name="van Nimwegen E."/>
            <person name="Verardo R."/>
            <person name="Wei C.L."/>
            <person name="Yagi K."/>
            <person name="Yamanishi H."/>
            <person name="Zabarovsky E."/>
            <person name="Zhu S."/>
            <person name="Zimmer A."/>
            <person name="Hide W."/>
            <person name="Bult C."/>
            <person name="Grimmond S.M."/>
            <person name="Teasdale R.D."/>
            <person name="Liu E.T."/>
            <person name="Brusic V."/>
            <person name="Quackenbush J."/>
            <person name="Wahlestedt C."/>
            <person name="Mattick J.S."/>
            <person name="Hume D.A."/>
            <person name="Kai C."/>
            <person name="Sasaki D."/>
            <person name="Tomaru Y."/>
            <person name="Fukuda S."/>
            <person name="Kanamori-Katayama M."/>
            <person name="Suzuki M."/>
            <person name="Aoki J."/>
            <person name="Arakawa T."/>
            <person name="Iida J."/>
            <person name="Imamura K."/>
            <person name="Itoh M."/>
            <person name="Kato T."/>
            <person name="Kawaji H."/>
            <person name="Kawagashira N."/>
            <person name="Kawashima T."/>
            <person name="Kojima M."/>
            <person name="Kondo S."/>
            <person name="Konno H."/>
            <person name="Nakano K."/>
            <person name="Ninomiya N."/>
            <person name="Nishio T."/>
            <person name="Okada M."/>
            <person name="Plessy C."/>
            <person name="Shibata K."/>
            <person name="Shiraki T."/>
            <person name="Suzuki S."/>
            <person name="Tagami M."/>
            <person name="Waki K."/>
            <person name="Watahiki A."/>
            <person name="Okamura-Oho Y."/>
            <person name="Suzuki H."/>
            <person name="Kawai J."/>
            <person name="Hayashizaki Y."/>
        </authorList>
    </citation>
    <scope>NUCLEOTIDE SEQUENCE [LARGE SCALE MRNA] OF 441-1158 (ISOFORM 1)</scope>
    <source>
        <strain evidence="35">C57BL/6J</strain>
        <tissue evidence="35">Embryonic liver</tissue>
    </source>
</reference>
<reference evidence="26" key="7">
    <citation type="journal article" date="2002" name="Nat. Neurosci.">
        <title>A transient receptor potential channel expressed in taste receptor cells.</title>
        <authorList>
            <person name="Perez C.A."/>
            <person name="Huang L."/>
            <person name="Rong M."/>
            <person name="Kozak J.A."/>
            <person name="Preuss A.K."/>
            <person name="Zhang H."/>
            <person name="Max M."/>
            <person name="Margolskee R.F."/>
        </authorList>
    </citation>
    <scope>TISSUE SPECIFICITY</scope>
</reference>
<reference evidence="26" key="8">
    <citation type="journal article" date="2003" name="Proc. Natl. Acad. Sci. U.S.A.">
        <title>Intracellular Ca2+ and the phospholipid PIP2 regulate the taste transduction ion channel TRPM5.</title>
        <authorList>
            <person name="Liu D."/>
            <person name="Liman E.R."/>
        </authorList>
    </citation>
    <scope>FUNCTION</scope>
    <scope>ACTIVITY REGULATION</scope>
</reference>
<reference evidence="26" key="9">
    <citation type="journal article" date="2005" name="Cell Calcium">
        <title>Comparison of functional properties of the Ca2+-activated cation channels TRPM4 and TRPM5 from mice.</title>
        <authorList>
            <person name="Ullrich N.D."/>
            <person name="Voets T."/>
            <person name="Prenen J."/>
            <person name="Vennekens R."/>
            <person name="Talavera K."/>
            <person name="Droogmans G."/>
            <person name="Nilius B."/>
        </authorList>
    </citation>
    <scope>ACTIVITY REGULATION</scope>
</reference>
<reference evidence="26" key="10">
    <citation type="journal article" date="2005" name="J. Biol. Chem.">
        <title>Extracellular acid block and acid-enhanced inactivation of the Ca2+-activated cation channel TRPM5 involve residues in the S3-S4 and S5-S6 extracellular domains.</title>
        <authorList>
            <person name="Liu D."/>
            <person name="Zhang Z."/>
            <person name="Liman E.R."/>
        </authorList>
    </citation>
    <scope>FUNCTION</scope>
    <scope>ACTIVITY REGULATION</scope>
    <scope>MUTAGENESIS OF GLU-831; HIS-897 AND HIS-935</scope>
</reference>
<reference evidence="26" key="11">
    <citation type="journal article" date="2005" name="Nature">
        <title>Heat activation of TRPM5 underlies thermal sensitivity of sweet taste.</title>
        <authorList>
            <person name="Talavera K."/>
            <person name="Yasumatsu K."/>
            <person name="Voets T."/>
            <person name="Droogmans G."/>
            <person name="Shigemura N."/>
            <person name="Ninomiya Y."/>
            <person name="Margolskee R.F."/>
            <person name="Nilius B."/>
        </authorList>
    </citation>
    <scope>FUNCTION</scope>
    <scope>ACTIVITY REGULATION</scope>
</reference>
<reference evidence="26" key="12">
    <citation type="journal article" date="2006" name="Biochim. Biophys. Acta">
        <title>Arachidonic acid can function as a signaling modulator by activating the TRPM5 cation channel in taste receptor cells.</title>
        <authorList>
            <person name="Oike H."/>
            <person name="Wakamori M."/>
            <person name="Mori Y."/>
            <person name="Nakanishi H."/>
            <person name="Taguchi R."/>
            <person name="Misaka T."/>
            <person name="Matsumoto I."/>
            <person name="Abe K."/>
        </authorList>
    </citation>
    <scope>FUNCTION</scope>
</reference>
<reference evidence="26" key="13">
    <citation type="journal article" date="2006" name="Chem. Senses">
        <title>Trpm5 null mice respond to bitter, sweet, and umami compounds.</title>
        <authorList>
            <person name="Damak S."/>
            <person name="Rong M."/>
            <person name="Yasumatsu K."/>
            <person name="Kokrashvili Z."/>
            <person name="Perez C.A."/>
            <person name="Shigemura N."/>
            <person name="Yoshida R."/>
            <person name="Mosinger B. Jr."/>
            <person name="Glendinning J.I."/>
            <person name="Ninomiya Y."/>
            <person name="Margolskee R.F."/>
        </authorList>
    </citation>
    <scope>FUNCTION</scope>
    <scope>DISRUPTION PHENOTYPE</scope>
</reference>
<reference evidence="26" key="14">
    <citation type="journal article" date="2007" name="BMC Neurosci.">
        <title>TRPM5, a taste-signaling transient receptor potential ion-channel, is a ubiquitous signaling component in chemosensory cells.</title>
        <authorList>
            <person name="Kaske S."/>
            <person name="Krasteva G."/>
            <person name="Koenig P."/>
            <person name="Kummer W."/>
            <person name="Hofmann T."/>
            <person name="Gudermann T."/>
            <person name="Chubanov V."/>
        </authorList>
    </citation>
    <scope>TISSUE SPECIFICITY</scope>
</reference>
<reference evidence="26" key="15">
    <citation type="journal article" date="2007" name="J. Neurosci.">
        <title>The transduction channel TRPM5 is gated by intracellular calcium in taste cells.</title>
        <authorList>
            <person name="Zhang Z."/>
            <person name="Zhao Z."/>
            <person name="Margolskee R."/>
            <person name="Liman E."/>
        </authorList>
    </citation>
    <scope>FUNCTION</scope>
    <scope>ACTIVITY REGULATION</scope>
</reference>
<reference evidence="26" key="16">
    <citation type="journal article" date="2007" name="Proc. Natl. Acad. Sci. U.S.A.">
        <title>Olfactory neurons expressing transient receptor potential channel M5 (TRPM5) are involved in sensing semiochemicals.</title>
        <authorList>
            <person name="Lin W."/>
            <person name="Margolskee R."/>
            <person name="Donnert G."/>
            <person name="Hell S.W."/>
            <person name="Restrepo D."/>
        </authorList>
    </citation>
    <scope>FUNCTION</scope>
    <scope>TISSUE SPECIFICITY</scope>
</reference>
<reference key="17">
    <citation type="journal article" date="2010" name="Pflugers Arch.">
        <title>TRPM5 regulates glucose-stimulated insulin secretion.</title>
        <authorList>
            <person name="Brixel L.R."/>
            <person name="Monteilh-Zoller M.K."/>
            <person name="Ingenbrandt C.S."/>
            <person name="Fleig A."/>
            <person name="Penner R."/>
            <person name="Enklaar T."/>
            <person name="Zabel B.U."/>
            <person name="Prawitt D."/>
        </authorList>
    </citation>
    <scope>DISRUPTION PHENOTYPE</scope>
    <scope>FUNCTION</scope>
</reference>
<reference key="18">
    <citation type="journal article" date="2010" name="Proc. Natl. Acad. Sci. U.S.A.">
        <title>Loss of high-frequency glucose-induced Ca2+ oscillations in pancreatic islets correlates with impaired glucose tolerance in Trpm5-/- mice.</title>
        <authorList>
            <person name="Colsoul B."/>
            <person name="Schraenen A."/>
            <person name="Lemaire K."/>
            <person name="Quintens R."/>
            <person name="Van Lommel L."/>
            <person name="Segal A."/>
            <person name="Owsianik G."/>
            <person name="Talavera K."/>
            <person name="Voets T."/>
            <person name="Margolskee R.F."/>
            <person name="Kokrashvili Z."/>
            <person name="Gilon P."/>
            <person name="Nilius B."/>
            <person name="Schuit F.C."/>
            <person name="Vennekens R."/>
        </authorList>
    </citation>
    <scope>DISRUPTION PHENOTYPE</scope>
    <scope>FUNCTION</scope>
</reference>
<reference key="19">
    <citation type="journal article" date="2024" name="Commun. Biol.">
        <title>TRPM5 activation depends on a synergistic effect of calcium and PKC phosphorylation.</title>
        <authorList>
            <person name="Nmarneh A."/>
            <person name="Priel A."/>
        </authorList>
    </citation>
    <scope>FUNCTION</scope>
    <scope>MUTAGENESIS OF SER-129</scope>
    <scope>PHOSPHORYLATION AT SER-129</scope>
</reference>
<keyword id="KW-0025">Alternative splicing</keyword>
<keyword id="KW-0106">Calcium</keyword>
<keyword id="KW-1003">Cell membrane</keyword>
<keyword id="KW-0175">Coiled coil</keyword>
<keyword id="KW-0407">Ion channel</keyword>
<keyword id="KW-0406">Ion transport</keyword>
<keyword id="KW-1071">Ligand-gated ion channel</keyword>
<keyword id="KW-0472">Membrane</keyword>
<keyword id="KW-0479">Metal-binding</keyword>
<keyword id="KW-0597">Phosphoprotein</keyword>
<keyword id="KW-0675">Receptor</keyword>
<keyword id="KW-1185">Reference proteome</keyword>
<keyword id="KW-0812">Transmembrane</keyword>
<keyword id="KW-1133">Transmembrane helix</keyword>
<keyword id="KW-0813">Transport</keyword>
<keyword id="KW-0851">Voltage-gated channel</keyword>
<accession>Q9JJH7</accession>
<accession>A3KN89</accession>
<accession>Q3TU14</accession>
<accession>Q7TPL4</accession>
<accession>Q99NF9</accession>
<accession>Q9EPM3</accession>
<accession>Q9EPM4</accession>